<evidence type="ECO:0000250" key="1">
    <source>
        <dbReference type="UniProtKB" id="P47158"/>
    </source>
</evidence>
<evidence type="ECO:0000255" key="2"/>
<evidence type="ECO:0000305" key="3"/>
<name>CAF17_CRYNB</name>
<keyword id="KW-0496">Mitochondrion</keyword>
<keyword id="KW-0809">Transit peptide</keyword>
<protein>
    <recommendedName>
        <fullName>Iron-sulfur cluster assembly factor IBA57 homolog, mitochondrial</fullName>
    </recommendedName>
</protein>
<gene>
    <name type="primary">CAF17</name>
    <name type="ordered locus">CNBA3570</name>
</gene>
<reference key="1">
    <citation type="journal article" date="2005" name="Science">
        <title>The genome of the basidiomycetous yeast and human pathogen Cryptococcus neoformans.</title>
        <authorList>
            <person name="Loftus B.J."/>
            <person name="Fung E."/>
            <person name="Roncaglia P."/>
            <person name="Rowley D."/>
            <person name="Amedeo P."/>
            <person name="Bruno D."/>
            <person name="Vamathevan J."/>
            <person name="Miranda M."/>
            <person name="Anderson I.J."/>
            <person name="Fraser J.A."/>
            <person name="Allen J.E."/>
            <person name="Bosdet I.E."/>
            <person name="Brent M.R."/>
            <person name="Chiu R."/>
            <person name="Doering T.L."/>
            <person name="Donlin M.J."/>
            <person name="D'Souza C.A."/>
            <person name="Fox D.S."/>
            <person name="Grinberg V."/>
            <person name="Fu J."/>
            <person name="Fukushima M."/>
            <person name="Haas B.J."/>
            <person name="Huang J.C."/>
            <person name="Janbon G."/>
            <person name="Jones S.J.M."/>
            <person name="Koo H.L."/>
            <person name="Krzywinski M.I."/>
            <person name="Kwon-Chung K.J."/>
            <person name="Lengeler K.B."/>
            <person name="Maiti R."/>
            <person name="Marra M.A."/>
            <person name="Marra R.E."/>
            <person name="Mathewson C.A."/>
            <person name="Mitchell T.G."/>
            <person name="Pertea M."/>
            <person name="Riggs F.R."/>
            <person name="Salzberg S.L."/>
            <person name="Schein J.E."/>
            <person name="Shvartsbeyn A."/>
            <person name="Shin H."/>
            <person name="Shumway M."/>
            <person name="Specht C.A."/>
            <person name="Suh B.B."/>
            <person name="Tenney A."/>
            <person name="Utterback T.R."/>
            <person name="Wickes B.L."/>
            <person name="Wortman J.R."/>
            <person name="Wye N.H."/>
            <person name="Kronstad J.W."/>
            <person name="Lodge J.K."/>
            <person name="Heitman J."/>
            <person name="Davis R.W."/>
            <person name="Fraser C.M."/>
            <person name="Hyman R.W."/>
        </authorList>
    </citation>
    <scope>NUCLEOTIDE SEQUENCE [LARGE SCALE GENOMIC DNA]</scope>
    <source>
        <strain>B-3501A</strain>
    </source>
</reference>
<feature type="transit peptide" description="Mitochondrion" evidence="2">
    <location>
        <begin position="1"/>
        <end status="unknown"/>
    </location>
</feature>
<feature type="chain" id="PRO_0000410028" description="Iron-sulfur cluster assembly factor IBA57 homolog, mitochondrial">
    <location>
        <begin status="unknown"/>
        <end position="375"/>
    </location>
</feature>
<proteinExistence type="inferred from homology"/>
<sequence>MAAPRIAHLAHKSVLELSGPDAQKFLKGLSCKDVEYLAGGYSGFLNASGRVLHTAFVFPRSKNSYLITHESPEDHPAPLTSLLPPFKLRSKVRIKDVTSQWDAWSAWGSDLQGGPSPIRTWKMGSGGASESHWDWEGGVRDLGLRDDEVGCWDLRAGWPHMGRQLLIPKGEKPSLATSHDLGNMDDYELHRMLLGVPEGPTEILPGHALPLESCMDIHGGVDFRKGCFLGQELTVRTYHTGATRKRILPVRLIPLDQTSSSSISDLLSSSPQQSLDEVSTPLDITYHPPSSSATRKPRSAGKILSLHNAVGLALVRLEMAERCWWSGDILRSSVSQWLDSGAGRLTTQVNGKEWGVYVGQGEAYAAALEHMSSSS</sequence>
<dbReference type="EMBL" id="AAEY01000002">
    <property type="protein sequence ID" value="EAL23241.1"/>
    <property type="molecule type" value="Genomic_DNA"/>
</dbReference>
<dbReference type="RefSeq" id="XP_777888.1">
    <property type="nucleotide sequence ID" value="XM_772795.1"/>
</dbReference>
<dbReference type="SMR" id="P0CM53"/>
<dbReference type="EnsemblFungi" id="AAW40892">
    <property type="protein sequence ID" value="AAW40892"/>
    <property type="gene ID" value="CNA03770"/>
</dbReference>
<dbReference type="GeneID" id="4933615"/>
<dbReference type="KEGG" id="cnb:CNBA3570"/>
<dbReference type="VEuPathDB" id="FungiDB:CNBA3570"/>
<dbReference type="HOGENOM" id="CLU_007884_7_0_1"/>
<dbReference type="OrthoDB" id="2442at5206"/>
<dbReference type="GO" id="GO:0005759">
    <property type="term" value="C:mitochondrial matrix"/>
    <property type="evidence" value="ECO:0007669"/>
    <property type="project" value="TreeGrafter"/>
</dbReference>
<dbReference type="GO" id="GO:0016740">
    <property type="term" value="F:transferase activity"/>
    <property type="evidence" value="ECO:0007669"/>
    <property type="project" value="UniProtKB-KW"/>
</dbReference>
<dbReference type="GO" id="GO:0016226">
    <property type="term" value="P:iron-sulfur cluster assembly"/>
    <property type="evidence" value="ECO:0007669"/>
    <property type="project" value="TreeGrafter"/>
</dbReference>
<dbReference type="FunFam" id="3.30.1360.120:FF:000036">
    <property type="entry name" value="Putative transferase CAF17, mitochondrial"/>
    <property type="match status" value="1"/>
</dbReference>
<dbReference type="Gene3D" id="3.30.1360.120">
    <property type="entry name" value="Probable tRNA modification gtpase trme, domain 1"/>
    <property type="match status" value="1"/>
</dbReference>
<dbReference type="InterPro" id="IPR006222">
    <property type="entry name" value="GCV_T_N"/>
</dbReference>
<dbReference type="InterPro" id="IPR027266">
    <property type="entry name" value="TrmE/GcvT_dom1"/>
</dbReference>
<dbReference type="InterPro" id="IPR045179">
    <property type="entry name" value="YgfZ/GcvT"/>
</dbReference>
<dbReference type="InterPro" id="IPR017703">
    <property type="entry name" value="YgfZ/GcvT_CS"/>
</dbReference>
<dbReference type="NCBIfam" id="TIGR03317">
    <property type="entry name" value="ygfZ_signature"/>
    <property type="match status" value="1"/>
</dbReference>
<dbReference type="PANTHER" id="PTHR22602">
    <property type="entry name" value="TRANSFERASE CAF17, MITOCHONDRIAL-RELATED"/>
    <property type="match status" value="1"/>
</dbReference>
<dbReference type="PANTHER" id="PTHR22602:SF0">
    <property type="entry name" value="TRANSFERASE CAF17, MITOCHONDRIAL-RELATED"/>
    <property type="match status" value="1"/>
</dbReference>
<dbReference type="Pfam" id="PF25455">
    <property type="entry name" value="Beta-barrel_CAF17_C"/>
    <property type="match status" value="1"/>
</dbReference>
<dbReference type="Pfam" id="PF01571">
    <property type="entry name" value="GCV_T"/>
    <property type="match status" value="1"/>
</dbReference>
<dbReference type="SUPFAM" id="SSF103025">
    <property type="entry name" value="Folate-binding domain"/>
    <property type="match status" value="1"/>
</dbReference>
<accession>P0CM53</accession>
<accession>Q55ZY3</accession>
<accession>Q5KP91</accession>
<organism>
    <name type="scientific">Cryptococcus neoformans var. neoformans serotype D (strain B-3501A)</name>
    <name type="common">Filobasidiella neoformans</name>
    <dbReference type="NCBI Taxonomy" id="283643"/>
    <lineage>
        <taxon>Eukaryota</taxon>
        <taxon>Fungi</taxon>
        <taxon>Dikarya</taxon>
        <taxon>Basidiomycota</taxon>
        <taxon>Agaricomycotina</taxon>
        <taxon>Tremellomycetes</taxon>
        <taxon>Tremellales</taxon>
        <taxon>Cryptococcaceae</taxon>
        <taxon>Cryptococcus</taxon>
        <taxon>Cryptococcus neoformans species complex</taxon>
    </lineage>
</organism>
<comment type="subcellular location">
    <subcellularLocation>
        <location evidence="1">Mitochondrion matrix</location>
    </subcellularLocation>
</comment>
<comment type="similarity">
    <text evidence="3">Belongs to the GcvT family. CAF17/IBA57 subfamily.</text>
</comment>